<gene>
    <name evidence="1" type="primary">obg</name>
    <name type="ordered locus">Nwi_0442</name>
</gene>
<reference key="1">
    <citation type="journal article" date="2006" name="Appl. Environ. Microbiol.">
        <title>Genome sequence of the chemolithoautotrophic nitrite-oxidizing bacterium Nitrobacter winogradskyi Nb-255.</title>
        <authorList>
            <person name="Starkenburg S.R."/>
            <person name="Chain P.S.G."/>
            <person name="Sayavedra-Soto L.A."/>
            <person name="Hauser L."/>
            <person name="Land M.L."/>
            <person name="Larimer F.W."/>
            <person name="Malfatti S.A."/>
            <person name="Klotz M.G."/>
            <person name="Bottomley P.J."/>
            <person name="Arp D.J."/>
            <person name="Hickey W.J."/>
        </authorList>
    </citation>
    <scope>NUCLEOTIDE SEQUENCE [LARGE SCALE GENOMIC DNA]</scope>
    <source>
        <strain>ATCC 25391 / DSM 10237 / CIP 104748 / NCIMB 11846 / Nb-255</strain>
    </source>
</reference>
<evidence type="ECO:0000255" key="1">
    <source>
        <dbReference type="HAMAP-Rule" id="MF_01454"/>
    </source>
</evidence>
<evidence type="ECO:0000255" key="2">
    <source>
        <dbReference type="PROSITE-ProRule" id="PRU01231"/>
    </source>
</evidence>
<evidence type="ECO:0000256" key="3">
    <source>
        <dbReference type="SAM" id="MobiDB-lite"/>
    </source>
</evidence>
<organism>
    <name type="scientific">Nitrobacter winogradskyi (strain ATCC 25391 / DSM 10237 / CIP 104748 / NCIMB 11846 / Nb-255)</name>
    <dbReference type="NCBI Taxonomy" id="323098"/>
    <lineage>
        <taxon>Bacteria</taxon>
        <taxon>Pseudomonadati</taxon>
        <taxon>Pseudomonadota</taxon>
        <taxon>Alphaproteobacteria</taxon>
        <taxon>Hyphomicrobiales</taxon>
        <taxon>Nitrobacteraceae</taxon>
        <taxon>Nitrobacter</taxon>
    </lineage>
</organism>
<proteinExistence type="inferred from homology"/>
<feature type="chain" id="PRO_0000386090" description="GTPase Obg">
    <location>
        <begin position="1"/>
        <end position="358"/>
    </location>
</feature>
<feature type="domain" description="Obg" evidence="2">
    <location>
        <begin position="1"/>
        <end position="159"/>
    </location>
</feature>
<feature type="domain" description="OBG-type G" evidence="1">
    <location>
        <begin position="160"/>
        <end position="327"/>
    </location>
</feature>
<feature type="region of interest" description="Disordered" evidence="3">
    <location>
        <begin position="335"/>
        <end position="358"/>
    </location>
</feature>
<feature type="binding site" evidence="1">
    <location>
        <begin position="166"/>
        <end position="173"/>
    </location>
    <ligand>
        <name>GTP</name>
        <dbReference type="ChEBI" id="CHEBI:37565"/>
    </ligand>
</feature>
<feature type="binding site" evidence="1">
    <location>
        <position position="173"/>
    </location>
    <ligand>
        <name>Mg(2+)</name>
        <dbReference type="ChEBI" id="CHEBI:18420"/>
    </ligand>
</feature>
<feature type="binding site" evidence="1">
    <location>
        <begin position="191"/>
        <end position="195"/>
    </location>
    <ligand>
        <name>GTP</name>
        <dbReference type="ChEBI" id="CHEBI:37565"/>
    </ligand>
</feature>
<feature type="binding site" evidence="1">
    <location>
        <position position="193"/>
    </location>
    <ligand>
        <name>Mg(2+)</name>
        <dbReference type="ChEBI" id="CHEBI:18420"/>
    </ligand>
</feature>
<feature type="binding site" evidence="1">
    <location>
        <begin position="212"/>
        <end position="215"/>
    </location>
    <ligand>
        <name>GTP</name>
        <dbReference type="ChEBI" id="CHEBI:37565"/>
    </ligand>
</feature>
<feature type="binding site" evidence="1">
    <location>
        <begin position="279"/>
        <end position="282"/>
    </location>
    <ligand>
        <name>GTP</name>
        <dbReference type="ChEBI" id="CHEBI:37565"/>
    </ligand>
</feature>
<feature type="binding site" evidence="1">
    <location>
        <begin position="308"/>
        <end position="310"/>
    </location>
    <ligand>
        <name>GTP</name>
        <dbReference type="ChEBI" id="CHEBI:37565"/>
    </ligand>
</feature>
<comment type="function">
    <text evidence="1">An essential GTPase which binds GTP, GDP and possibly (p)ppGpp with moderate affinity, with high nucleotide exchange rates and a fairly low GTP hydrolysis rate. Plays a role in control of the cell cycle, stress response, ribosome biogenesis and in those bacteria that undergo differentiation, in morphogenesis control.</text>
</comment>
<comment type="cofactor">
    <cofactor evidence="1">
        <name>Mg(2+)</name>
        <dbReference type="ChEBI" id="CHEBI:18420"/>
    </cofactor>
</comment>
<comment type="subunit">
    <text evidence="1">Monomer.</text>
</comment>
<comment type="subcellular location">
    <subcellularLocation>
        <location evidence="1">Cytoplasm</location>
    </subcellularLocation>
</comment>
<comment type="similarity">
    <text evidence="1">Belongs to the TRAFAC class OBG-HflX-like GTPase superfamily. OBG GTPase family.</text>
</comment>
<dbReference type="EC" id="3.6.5.-" evidence="1"/>
<dbReference type="EMBL" id="CP000115">
    <property type="protein sequence ID" value="ABA03709.1"/>
    <property type="molecule type" value="Genomic_DNA"/>
</dbReference>
<dbReference type="RefSeq" id="WP_011313773.1">
    <property type="nucleotide sequence ID" value="NC_007406.1"/>
</dbReference>
<dbReference type="SMR" id="Q3SVI2"/>
<dbReference type="STRING" id="323098.Nwi_0442"/>
<dbReference type="KEGG" id="nwi:Nwi_0442"/>
<dbReference type="eggNOG" id="COG0536">
    <property type="taxonomic scope" value="Bacteria"/>
</dbReference>
<dbReference type="HOGENOM" id="CLU_011747_2_0_5"/>
<dbReference type="OrthoDB" id="9807318at2"/>
<dbReference type="Proteomes" id="UP000002531">
    <property type="component" value="Chromosome"/>
</dbReference>
<dbReference type="GO" id="GO:0005737">
    <property type="term" value="C:cytoplasm"/>
    <property type="evidence" value="ECO:0007669"/>
    <property type="project" value="UniProtKB-SubCell"/>
</dbReference>
<dbReference type="GO" id="GO:0005525">
    <property type="term" value="F:GTP binding"/>
    <property type="evidence" value="ECO:0007669"/>
    <property type="project" value="UniProtKB-UniRule"/>
</dbReference>
<dbReference type="GO" id="GO:0003924">
    <property type="term" value="F:GTPase activity"/>
    <property type="evidence" value="ECO:0007669"/>
    <property type="project" value="UniProtKB-UniRule"/>
</dbReference>
<dbReference type="GO" id="GO:0000287">
    <property type="term" value="F:magnesium ion binding"/>
    <property type="evidence" value="ECO:0007669"/>
    <property type="project" value="InterPro"/>
</dbReference>
<dbReference type="GO" id="GO:0042254">
    <property type="term" value="P:ribosome biogenesis"/>
    <property type="evidence" value="ECO:0007669"/>
    <property type="project" value="UniProtKB-UniRule"/>
</dbReference>
<dbReference type="CDD" id="cd01898">
    <property type="entry name" value="Obg"/>
    <property type="match status" value="1"/>
</dbReference>
<dbReference type="FunFam" id="2.70.210.12:FF:000001">
    <property type="entry name" value="GTPase Obg"/>
    <property type="match status" value="1"/>
</dbReference>
<dbReference type="Gene3D" id="2.70.210.12">
    <property type="entry name" value="GTP1/OBG domain"/>
    <property type="match status" value="1"/>
</dbReference>
<dbReference type="Gene3D" id="3.40.50.300">
    <property type="entry name" value="P-loop containing nucleotide triphosphate hydrolases"/>
    <property type="match status" value="1"/>
</dbReference>
<dbReference type="HAMAP" id="MF_01454">
    <property type="entry name" value="GTPase_Obg"/>
    <property type="match status" value="1"/>
</dbReference>
<dbReference type="InterPro" id="IPR031167">
    <property type="entry name" value="G_OBG"/>
</dbReference>
<dbReference type="InterPro" id="IPR006073">
    <property type="entry name" value="GTP-bd"/>
</dbReference>
<dbReference type="InterPro" id="IPR014100">
    <property type="entry name" value="GTP-bd_Obg/CgtA"/>
</dbReference>
<dbReference type="InterPro" id="IPR006074">
    <property type="entry name" value="GTP1-OBG_CS"/>
</dbReference>
<dbReference type="InterPro" id="IPR006169">
    <property type="entry name" value="GTP1_OBG_dom"/>
</dbReference>
<dbReference type="InterPro" id="IPR036726">
    <property type="entry name" value="GTP1_OBG_dom_sf"/>
</dbReference>
<dbReference type="InterPro" id="IPR045086">
    <property type="entry name" value="OBG_GTPase"/>
</dbReference>
<dbReference type="InterPro" id="IPR027417">
    <property type="entry name" value="P-loop_NTPase"/>
</dbReference>
<dbReference type="NCBIfam" id="TIGR02729">
    <property type="entry name" value="Obg_CgtA"/>
    <property type="match status" value="1"/>
</dbReference>
<dbReference type="NCBIfam" id="NF008955">
    <property type="entry name" value="PRK12297.1"/>
    <property type="match status" value="1"/>
</dbReference>
<dbReference type="NCBIfam" id="NF008956">
    <property type="entry name" value="PRK12299.1"/>
    <property type="match status" value="1"/>
</dbReference>
<dbReference type="PANTHER" id="PTHR11702">
    <property type="entry name" value="DEVELOPMENTALLY REGULATED GTP-BINDING PROTEIN-RELATED"/>
    <property type="match status" value="1"/>
</dbReference>
<dbReference type="PANTHER" id="PTHR11702:SF31">
    <property type="entry name" value="MITOCHONDRIAL RIBOSOME-ASSOCIATED GTPASE 2"/>
    <property type="match status" value="1"/>
</dbReference>
<dbReference type="Pfam" id="PF01018">
    <property type="entry name" value="GTP1_OBG"/>
    <property type="match status" value="1"/>
</dbReference>
<dbReference type="Pfam" id="PF01926">
    <property type="entry name" value="MMR_HSR1"/>
    <property type="match status" value="1"/>
</dbReference>
<dbReference type="PIRSF" id="PIRSF002401">
    <property type="entry name" value="GTP_bd_Obg/CgtA"/>
    <property type="match status" value="1"/>
</dbReference>
<dbReference type="PRINTS" id="PR00326">
    <property type="entry name" value="GTP1OBG"/>
</dbReference>
<dbReference type="SUPFAM" id="SSF82051">
    <property type="entry name" value="Obg GTP-binding protein N-terminal domain"/>
    <property type="match status" value="1"/>
</dbReference>
<dbReference type="SUPFAM" id="SSF52540">
    <property type="entry name" value="P-loop containing nucleoside triphosphate hydrolases"/>
    <property type="match status" value="1"/>
</dbReference>
<dbReference type="PROSITE" id="PS51710">
    <property type="entry name" value="G_OBG"/>
    <property type="match status" value="1"/>
</dbReference>
<dbReference type="PROSITE" id="PS00905">
    <property type="entry name" value="GTP1_OBG"/>
    <property type="match status" value="1"/>
</dbReference>
<dbReference type="PROSITE" id="PS51883">
    <property type="entry name" value="OBG"/>
    <property type="match status" value="1"/>
</dbReference>
<sequence length="358" mass="38264">MKFLDEAKVYIRSGDGGNGCVAFRREKFIEFGGPSGGNGGRGGDVIVEVADGLNTLIDYRYQQHFKAPKGANGMGSDRHGANGKAIVLKVPLGTQIIDEDRETLIHDFTRVGERLVLAEGGNGGFGNAHFKSSTNRAPRRANPGQPGEERWIWLRLKLIADAGLVGLPNAGKSTFLSKVSAAKPKIADYPFTTLHPQLGVVRVQDREFVLADIPGLIEGAHEGAGLGDRFLGHVERCRVLLHLVDAGCDHAGRAYKIVRGEMEAYAGALAEKVEIVALNKIDAVTAEDLKKQRDRLKRAAKKTPLLVSGVTGEGVQDVLRALVEVIGQAPVSDKAKGADASAAQAMETPVARAKPWSP</sequence>
<accession>Q3SVI2</accession>
<protein>
    <recommendedName>
        <fullName evidence="1">GTPase Obg</fullName>
        <ecNumber evidence="1">3.6.5.-</ecNumber>
    </recommendedName>
    <alternativeName>
        <fullName evidence="1">GTP-binding protein Obg</fullName>
    </alternativeName>
</protein>
<keyword id="KW-0963">Cytoplasm</keyword>
<keyword id="KW-0342">GTP-binding</keyword>
<keyword id="KW-0378">Hydrolase</keyword>
<keyword id="KW-0460">Magnesium</keyword>
<keyword id="KW-0479">Metal-binding</keyword>
<keyword id="KW-0547">Nucleotide-binding</keyword>
<keyword id="KW-1185">Reference proteome</keyword>
<name>OBG_NITWN</name>